<gene>
    <name evidence="1" type="primary">rplU</name>
    <name type="ordered locus">R03155</name>
    <name type="ORF">SMc03770</name>
</gene>
<comment type="function">
    <text evidence="1">This protein binds to 23S rRNA in the presence of protein L20.</text>
</comment>
<comment type="subunit">
    <text evidence="1">Part of the 50S ribosomal subunit. Contacts protein L20.</text>
</comment>
<comment type="similarity">
    <text evidence="1">Belongs to the bacterial ribosomal protein bL21 family.</text>
</comment>
<feature type="chain" id="PRO_0000270719" description="Large ribosomal subunit protein bL21">
    <location>
        <begin position="1"/>
        <end position="123"/>
    </location>
</feature>
<reference key="1">
    <citation type="journal article" date="2001" name="Proc. Natl. Acad. Sci. U.S.A.">
        <title>Analysis of the chromosome sequence of the legume symbiont Sinorhizobium meliloti strain 1021.</title>
        <authorList>
            <person name="Capela D."/>
            <person name="Barloy-Hubler F."/>
            <person name="Gouzy J."/>
            <person name="Bothe G."/>
            <person name="Ampe F."/>
            <person name="Batut J."/>
            <person name="Boistard P."/>
            <person name="Becker A."/>
            <person name="Boutry M."/>
            <person name="Cadieu E."/>
            <person name="Dreano S."/>
            <person name="Gloux S."/>
            <person name="Godrie T."/>
            <person name="Goffeau A."/>
            <person name="Kahn D."/>
            <person name="Kiss E."/>
            <person name="Lelaure V."/>
            <person name="Masuy D."/>
            <person name="Pohl T."/>
            <person name="Portetelle D."/>
            <person name="Puehler A."/>
            <person name="Purnelle B."/>
            <person name="Ramsperger U."/>
            <person name="Renard C."/>
            <person name="Thebault P."/>
            <person name="Vandenbol M."/>
            <person name="Weidner S."/>
            <person name="Galibert F."/>
        </authorList>
    </citation>
    <scope>NUCLEOTIDE SEQUENCE [LARGE SCALE GENOMIC DNA]</scope>
    <source>
        <strain>1021</strain>
    </source>
</reference>
<reference key="2">
    <citation type="journal article" date="2001" name="Science">
        <title>The composite genome of the legume symbiont Sinorhizobium meliloti.</title>
        <authorList>
            <person name="Galibert F."/>
            <person name="Finan T.M."/>
            <person name="Long S.R."/>
            <person name="Puehler A."/>
            <person name="Abola P."/>
            <person name="Ampe F."/>
            <person name="Barloy-Hubler F."/>
            <person name="Barnett M.J."/>
            <person name="Becker A."/>
            <person name="Boistard P."/>
            <person name="Bothe G."/>
            <person name="Boutry M."/>
            <person name="Bowser L."/>
            <person name="Buhrmester J."/>
            <person name="Cadieu E."/>
            <person name="Capela D."/>
            <person name="Chain P."/>
            <person name="Cowie A."/>
            <person name="Davis R.W."/>
            <person name="Dreano S."/>
            <person name="Federspiel N.A."/>
            <person name="Fisher R.F."/>
            <person name="Gloux S."/>
            <person name="Godrie T."/>
            <person name="Goffeau A."/>
            <person name="Golding B."/>
            <person name="Gouzy J."/>
            <person name="Gurjal M."/>
            <person name="Hernandez-Lucas I."/>
            <person name="Hong A."/>
            <person name="Huizar L."/>
            <person name="Hyman R.W."/>
            <person name="Jones T."/>
            <person name="Kahn D."/>
            <person name="Kahn M.L."/>
            <person name="Kalman S."/>
            <person name="Keating D.H."/>
            <person name="Kiss E."/>
            <person name="Komp C."/>
            <person name="Lelaure V."/>
            <person name="Masuy D."/>
            <person name="Palm C."/>
            <person name="Peck M.C."/>
            <person name="Pohl T.M."/>
            <person name="Portetelle D."/>
            <person name="Purnelle B."/>
            <person name="Ramsperger U."/>
            <person name="Surzycki R."/>
            <person name="Thebault P."/>
            <person name="Vandenbol M."/>
            <person name="Vorhoelter F.J."/>
            <person name="Weidner S."/>
            <person name="Wells D.H."/>
            <person name="Wong K."/>
            <person name="Yeh K.-C."/>
            <person name="Batut J."/>
        </authorList>
    </citation>
    <scope>NUCLEOTIDE SEQUENCE [LARGE SCALE GENOMIC DNA]</scope>
    <source>
        <strain>1021</strain>
    </source>
</reference>
<dbReference type="EMBL" id="AL591688">
    <property type="protein sequence ID" value="CAC47734.1"/>
    <property type="molecule type" value="Genomic_DNA"/>
</dbReference>
<dbReference type="RefSeq" id="NP_387261.1">
    <property type="nucleotide sequence ID" value="NC_003047.1"/>
</dbReference>
<dbReference type="RefSeq" id="WP_003531204.1">
    <property type="nucleotide sequence ID" value="NC_003047.1"/>
</dbReference>
<dbReference type="SMR" id="Q92LB8"/>
<dbReference type="EnsemblBacteria" id="CAC47734">
    <property type="protein sequence ID" value="CAC47734"/>
    <property type="gene ID" value="SMc03770"/>
</dbReference>
<dbReference type="GeneID" id="89574119"/>
<dbReference type="KEGG" id="sme:SMc03770"/>
<dbReference type="PATRIC" id="fig|266834.11.peg.4703"/>
<dbReference type="eggNOG" id="COG0261">
    <property type="taxonomic scope" value="Bacteria"/>
</dbReference>
<dbReference type="HOGENOM" id="CLU_061463_1_2_5"/>
<dbReference type="OrthoDB" id="9813334at2"/>
<dbReference type="Proteomes" id="UP000001976">
    <property type="component" value="Chromosome"/>
</dbReference>
<dbReference type="GO" id="GO:0005737">
    <property type="term" value="C:cytoplasm"/>
    <property type="evidence" value="ECO:0007669"/>
    <property type="project" value="UniProtKB-ARBA"/>
</dbReference>
<dbReference type="GO" id="GO:1990904">
    <property type="term" value="C:ribonucleoprotein complex"/>
    <property type="evidence" value="ECO:0007669"/>
    <property type="project" value="UniProtKB-KW"/>
</dbReference>
<dbReference type="GO" id="GO:0005840">
    <property type="term" value="C:ribosome"/>
    <property type="evidence" value="ECO:0007669"/>
    <property type="project" value="UniProtKB-KW"/>
</dbReference>
<dbReference type="GO" id="GO:0019843">
    <property type="term" value="F:rRNA binding"/>
    <property type="evidence" value="ECO:0007669"/>
    <property type="project" value="UniProtKB-UniRule"/>
</dbReference>
<dbReference type="GO" id="GO:0003735">
    <property type="term" value="F:structural constituent of ribosome"/>
    <property type="evidence" value="ECO:0007669"/>
    <property type="project" value="InterPro"/>
</dbReference>
<dbReference type="GO" id="GO:0006412">
    <property type="term" value="P:translation"/>
    <property type="evidence" value="ECO:0007669"/>
    <property type="project" value="UniProtKB-UniRule"/>
</dbReference>
<dbReference type="HAMAP" id="MF_01363">
    <property type="entry name" value="Ribosomal_bL21"/>
    <property type="match status" value="1"/>
</dbReference>
<dbReference type="InterPro" id="IPR028909">
    <property type="entry name" value="bL21-like"/>
</dbReference>
<dbReference type="InterPro" id="IPR036164">
    <property type="entry name" value="bL21-like_sf"/>
</dbReference>
<dbReference type="InterPro" id="IPR001787">
    <property type="entry name" value="Ribosomal_bL21"/>
</dbReference>
<dbReference type="NCBIfam" id="TIGR00061">
    <property type="entry name" value="L21"/>
    <property type="match status" value="1"/>
</dbReference>
<dbReference type="PANTHER" id="PTHR21349">
    <property type="entry name" value="50S RIBOSOMAL PROTEIN L21"/>
    <property type="match status" value="1"/>
</dbReference>
<dbReference type="PANTHER" id="PTHR21349:SF0">
    <property type="entry name" value="LARGE RIBOSOMAL SUBUNIT PROTEIN BL21M"/>
    <property type="match status" value="1"/>
</dbReference>
<dbReference type="Pfam" id="PF00829">
    <property type="entry name" value="Ribosomal_L21p"/>
    <property type="match status" value="1"/>
</dbReference>
<dbReference type="SUPFAM" id="SSF141091">
    <property type="entry name" value="L21p-like"/>
    <property type="match status" value="1"/>
</dbReference>
<evidence type="ECO:0000255" key="1">
    <source>
        <dbReference type="HAMAP-Rule" id="MF_01363"/>
    </source>
</evidence>
<evidence type="ECO:0000305" key="2"/>
<sequence>MFAVIKTGGKQYRVAANDVITIEKLEGVAGDKIEFTEILMVGVGADATIGAPFVEGAVVSAEVVDQGRAKKVIAFKKRRRQNSKRSRGHRQHQTIVRILDIAAAGGKAKKASKKTEAAAEAAN</sequence>
<proteinExistence type="inferred from homology"/>
<accession>Q92LB8</accession>
<keyword id="KW-1185">Reference proteome</keyword>
<keyword id="KW-0687">Ribonucleoprotein</keyword>
<keyword id="KW-0689">Ribosomal protein</keyword>
<keyword id="KW-0694">RNA-binding</keyword>
<keyword id="KW-0699">rRNA-binding</keyword>
<organism>
    <name type="scientific">Rhizobium meliloti (strain 1021)</name>
    <name type="common">Ensifer meliloti</name>
    <name type="synonym">Sinorhizobium meliloti</name>
    <dbReference type="NCBI Taxonomy" id="266834"/>
    <lineage>
        <taxon>Bacteria</taxon>
        <taxon>Pseudomonadati</taxon>
        <taxon>Pseudomonadota</taxon>
        <taxon>Alphaproteobacteria</taxon>
        <taxon>Hyphomicrobiales</taxon>
        <taxon>Rhizobiaceae</taxon>
        <taxon>Sinorhizobium/Ensifer group</taxon>
        <taxon>Sinorhizobium</taxon>
    </lineage>
</organism>
<name>RL21_RHIME</name>
<protein>
    <recommendedName>
        <fullName evidence="1">Large ribosomal subunit protein bL21</fullName>
    </recommendedName>
    <alternativeName>
        <fullName evidence="2">50S ribosomal protein L21</fullName>
    </alternativeName>
</protein>